<feature type="chain" id="PRO_1000073682" description="Beta-ketoacyl-[acyl-carrier-protein] synthase III">
    <location>
        <begin position="1"/>
        <end position="313"/>
    </location>
</feature>
<feature type="region of interest" description="ACP-binding" evidence="1">
    <location>
        <begin position="239"/>
        <end position="243"/>
    </location>
</feature>
<feature type="active site" evidence="1">
    <location>
        <position position="112"/>
    </location>
</feature>
<feature type="active site" evidence="1">
    <location>
        <position position="238"/>
    </location>
</feature>
<feature type="active site" evidence="1">
    <location>
        <position position="268"/>
    </location>
</feature>
<name>FABH_STAAE</name>
<keyword id="KW-0012">Acyltransferase</keyword>
<keyword id="KW-0963">Cytoplasm</keyword>
<keyword id="KW-0275">Fatty acid biosynthesis</keyword>
<keyword id="KW-0276">Fatty acid metabolism</keyword>
<keyword id="KW-0444">Lipid biosynthesis</keyword>
<keyword id="KW-0443">Lipid metabolism</keyword>
<keyword id="KW-0511">Multifunctional enzyme</keyword>
<keyword id="KW-0808">Transferase</keyword>
<dbReference type="EC" id="2.3.1.180" evidence="1"/>
<dbReference type="EMBL" id="AP009351">
    <property type="protein sequence ID" value="BAF67125.1"/>
    <property type="molecule type" value="Genomic_DNA"/>
</dbReference>
<dbReference type="RefSeq" id="WP_001100525.1">
    <property type="nucleotide sequence ID" value="NZ_JBBIAE010000002.1"/>
</dbReference>
<dbReference type="SMR" id="A6QFJ3"/>
<dbReference type="KEGG" id="sae:NWMN_0853"/>
<dbReference type="HOGENOM" id="CLU_039592_3_1_9"/>
<dbReference type="UniPathway" id="UPA00094"/>
<dbReference type="Proteomes" id="UP000006386">
    <property type="component" value="Chromosome"/>
</dbReference>
<dbReference type="GO" id="GO:0005737">
    <property type="term" value="C:cytoplasm"/>
    <property type="evidence" value="ECO:0007669"/>
    <property type="project" value="UniProtKB-SubCell"/>
</dbReference>
<dbReference type="GO" id="GO:0004315">
    <property type="term" value="F:3-oxoacyl-[acyl-carrier-protein] synthase activity"/>
    <property type="evidence" value="ECO:0007669"/>
    <property type="project" value="InterPro"/>
</dbReference>
<dbReference type="GO" id="GO:0033818">
    <property type="term" value="F:beta-ketoacyl-acyl-carrier-protein synthase III activity"/>
    <property type="evidence" value="ECO:0007669"/>
    <property type="project" value="UniProtKB-UniRule"/>
</dbReference>
<dbReference type="GO" id="GO:0006633">
    <property type="term" value="P:fatty acid biosynthetic process"/>
    <property type="evidence" value="ECO:0007669"/>
    <property type="project" value="UniProtKB-UniRule"/>
</dbReference>
<dbReference type="CDD" id="cd00830">
    <property type="entry name" value="KAS_III"/>
    <property type="match status" value="1"/>
</dbReference>
<dbReference type="FunFam" id="3.40.47.10:FF:000004">
    <property type="entry name" value="3-oxoacyl-[acyl-carrier-protein] synthase 3"/>
    <property type="match status" value="1"/>
</dbReference>
<dbReference type="Gene3D" id="3.40.47.10">
    <property type="match status" value="1"/>
</dbReference>
<dbReference type="HAMAP" id="MF_01815">
    <property type="entry name" value="FabH"/>
    <property type="match status" value="1"/>
</dbReference>
<dbReference type="InterPro" id="IPR013747">
    <property type="entry name" value="ACP_syn_III_C"/>
</dbReference>
<dbReference type="InterPro" id="IPR013751">
    <property type="entry name" value="ACP_syn_III_N"/>
</dbReference>
<dbReference type="InterPro" id="IPR004655">
    <property type="entry name" value="FabH"/>
</dbReference>
<dbReference type="InterPro" id="IPR016039">
    <property type="entry name" value="Thiolase-like"/>
</dbReference>
<dbReference type="NCBIfam" id="TIGR00747">
    <property type="entry name" value="fabH"/>
    <property type="match status" value="1"/>
</dbReference>
<dbReference type="NCBIfam" id="NF006829">
    <property type="entry name" value="PRK09352.1"/>
    <property type="match status" value="1"/>
</dbReference>
<dbReference type="PANTHER" id="PTHR43091">
    <property type="entry name" value="3-OXOACYL-[ACYL-CARRIER-PROTEIN] SYNTHASE"/>
    <property type="match status" value="1"/>
</dbReference>
<dbReference type="PANTHER" id="PTHR43091:SF1">
    <property type="entry name" value="BETA-KETOACYL-[ACYL-CARRIER-PROTEIN] SYNTHASE III, CHLOROPLASTIC"/>
    <property type="match status" value="1"/>
</dbReference>
<dbReference type="Pfam" id="PF08545">
    <property type="entry name" value="ACP_syn_III"/>
    <property type="match status" value="1"/>
</dbReference>
<dbReference type="Pfam" id="PF08541">
    <property type="entry name" value="ACP_syn_III_C"/>
    <property type="match status" value="1"/>
</dbReference>
<dbReference type="SUPFAM" id="SSF53901">
    <property type="entry name" value="Thiolase-like"/>
    <property type="match status" value="1"/>
</dbReference>
<reference key="1">
    <citation type="journal article" date="2008" name="J. Bacteriol.">
        <title>Genome sequence of Staphylococcus aureus strain Newman and comparative analysis of staphylococcal genomes: polymorphism and evolution of two major pathogenicity islands.</title>
        <authorList>
            <person name="Baba T."/>
            <person name="Bae T."/>
            <person name="Schneewind O."/>
            <person name="Takeuchi F."/>
            <person name="Hiramatsu K."/>
        </authorList>
    </citation>
    <scope>NUCLEOTIDE SEQUENCE [LARGE SCALE GENOMIC DNA]</scope>
    <source>
        <strain>Newman</strain>
    </source>
</reference>
<proteinExistence type="inferred from homology"/>
<organism>
    <name type="scientific">Staphylococcus aureus (strain Newman)</name>
    <dbReference type="NCBI Taxonomy" id="426430"/>
    <lineage>
        <taxon>Bacteria</taxon>
        <taxon>Bacillati</taxon>
        <taxon>Bacillota</taxon>
        <taxon>Bacilli</taxon>
        <taxon>Bacillales</taxon>
        <taxon>Staphylococcaceae</taxon>
        <taxon>Staphylococcus</taxon>
    </lineage>
</organism>
<gene>
    <name evidence="1" type="primary">fabH</name>
    <name type="ordered locus">NWMN_0853</name>
</gene>
<sequence>MNVGIKGFGAYAPEKIIDNAYFEQFLDTSDEWISKMTGIKERHWADDDQDTSDLAYEASLKAIADAGIQPEDIDMIIVATATGDMPFPTVANMLQERLGTGKVASMDQLAACSGFMYSMITAKQYVQSGDYHNILVVGADKLSKITDLTDRSTAVLFGDGAGAVIIGEVSDGRGIISYEMGSDGTGGKHLYLDKDTGKLKMNGREVFKFAVRIMGDASTRVVEKANLTSDDIDLFIPHQANIRIMESARERLGISKDKMSVSVNKYGNTSAASIPLSIDQELKNGKIKDDDTIVLVGFGGGLTWGAMTIKWGK</sequence>
<comment type="function">
    <text evidence="1">Catalyzes the condensation reaction of fatty acid synthesis by the addition to an acyl acceptor of two carbons from malonyl-ACP. Catalyzes the first condensation reaction which initiates fatty acid synthesis and may therefore play a role in governing the total rate of fatty acid production. Possesses both acetoacetyl-ACP synthase and acetyl transacylase activities. Its substrate specificity determines the biosynthesis of branched-chain and/or straight-chain of fatty acids.</text>
</comment>
<comment type="catalytic activity">
    <reaction evidence="1">
        <text>malonyl-[ACP] + acetyl-CoA + H(+) = 3-oxobutanoyl-[ACP] + CO2 + CoA</text>
        <dbReference type="Rhea" id="RHEA:12080"/>
        <dbReference type="Rhea" id="RHEA-COMP:9623"/>
        <dbReference type="Rhea" id="RHEA-COMP:9625"/>
        <dbReference type="ChEBI" id="CHEBI:15378"/>
        <dbReference type="ChEBI" id="CHEBI:16526"/>
        <dbReference type="ChEBI" id="CHEBI:57287"/>
        <dbReference type="ChEBI" id="CHEBI:57288"/>
        <dbReference type="ChEBI" id="CHEBI:78449"/>
        <dbReference type="ChEBI" id="CHEBI:78450"/>
        <dbReference type="EC" id="2.3.1.180"/>
    </reaction>
</comment>
<comment type="pathway">
    <text evidence="1">Lipid metabolism; fatty acid biosynthesis.</text>
</comment>
<comment type="subunit">
    <text evidence="1">Homodimer.</text>
</comment>
<comment type="subcellular location">
    <subcellularLocation>
        <location evidence="1">Cytoplasm</location>
    </subcellularLocation>
</comment>
<comment type="domain">
    <text evidence="1">The last Arg residue of the ACP-binding site is essential for the weak association between ACP/AcpP and FabH.</text>
</comment>
<comment type="similarity">
    <text evidence="1">Belongs to the thiolase-like superfamily. FabH family.</text>
</comment>
<evidence type="ECO:0000255" key="1">
    <source>
        <dbReference type="HAMAP-Rule" id="MF_01815"/>
    </source>
</evidence>
<protein>
    <recommendedName>
        <fullName evidence="1">Beta-ketoacyl-[acyl-carrier-protein] synthase III</fullName>
        <shortName evidence="1">Beta-ketoacyl-ACP synthase III</shortName>
        <shortName evidence="1">KAS III</shortName>
        <ecNumber evidence="1">2.3.1.180</ecNumber>
    </recommendedName>
    <alternativeName>
        <fullName evidence="1">3-oxoacyl-[acyl-carrier-protein] synthase 3</fullName>
    </alternativeName>
    <alternativeName>
        <fullName evidence="1">3-oxoacyl-[acyl-carrier-protein] synthase III</fullName>
    </alternativeName>
</protein>
<accession>A6QFJ3</accession>